<dbReference type="EMBL" id="AE017282">
    <property type="protein sequence ID" value="AAU91460.1"/>
    <property type="molecule type" value="Genomic_DNA"/>
</dbReference>
<dbReference type="RefSeq" id="WP_010961596.1">
    <property type="nucleotide sequence ID" value="NC_002977.6"/>
</dbReference>
<dbReference type="SMR" id="Q605B6"/>
<dbReference type="STRING" id="243233.MCA2368"/>
<dbReference type="GeneID" id="88224570"/>
<dbReference type="KEGG" id="mca:MCA2368"/>
<dbReference type="eggNOG" id="COG0185">
    <property type="taxonomic scope" value="Bacteria"/>
</dbReference>
<dbReference type="HOGENOM" id="CLU_144911_0_1_6"/>
<dbReference type="Proteomes" id="UP000006821">
    <property type="component" value="Chromosome"/>
</dbReference>
<dbReference type="GO" id="GO:0005737">
    <property type="term" value="C:cytoplasm"/>
    <property type="evidence" value="ECO:0007669"/>
    <property type="project" value="UniProtKB-ARBA"/>
</dbReference>
<dbReference type="GO" id="GO:0015935">
    <property type="term" value="C:small ribosomal subunit"/>
    <property type="evidence" value="ECO:0007669"/>
    <property type="project" value="InterPro"/>
</dbReference>
<dbReference type="GO" id="GO:0019843">
    <property type="term" value="F:rRNA binding"/>
    <property type="evidence" value="ECO:0007669"/>
    <property type="project" value="UniProtKB-UniRule"/>
</dbReference>
<dbReference type="GO" id="GO:0003735">
    <property type="term" value="F:structural constituent of ribosome"/>
    <property type="evidence" value="ECO:0007669"/>
    <property type="project" value="InterPro"/>
</dbReference>
<dbReference type="GO" id="GO:0000028">
    <property type="term" value="P:ribosomal small subunit assembly"/>
    <property type="evidence" value="ECO:0007669"/>
    <property type="project" value="TreeGrafter"/>
</dbReference>
<dbReference type="GO" id="GO:0006412">
    <property type="term" value="P:translation"/>
    <property type="evidence" value="ECO:0007669"/>
    <property type="project" value="UniProtKB-UniRule"/>
</dbReference>
<dbReference type="FunFam" id="3.30.860.10:FF:000001">
    <property type="entry name" value="30S ribosomal protein S19"/>
    <property type="match status" value="1"/>
</dbReference>
<dbReference type="Gene3D" id="3.30.860.10">
    <property type="entry name" value="30s Ribosomal Protein S19, Chain A"/>
    <property type="match status" value="1"/>
</dbReference>
<dbReference type="HAMAP" id="MF_00531">
    <property type="entry name" value="Ribosomal_uS19"/>
    <property type="match status" value="1"/>
</dbReference>
<dbReference type="InterPro" id="IPR002222">
    <property type="entry name" value="Ribosomal_uS19"/>
</dbReference>
<dbReference type="InterPro" id="IPR005732">
    <property type="entry name" value="Ribosomal_uS19_bac-type"/>
</dbReference>
<dbReference type="InterPro" id="IPR020934">
    <property type="entry name" value="Ribosomal_uS19_CS"/>
</dbReference>
<dbReference type="InterPro" id="IPR023575">
    <property type="entry name" value="Ribosomal_uS19_SF"/>
</dbReference>
<dbReference type="NCBIfam" id="TIGR01050">
    <property type="entry name" value="rpsS_bact"/>
    <property type="match status" value="1"/>
</dbReference>
<dbReference type="PANTHER" id="PTHR11880">
    <property type="entry name" value="RIBOSOMAL PROTEIN S19P FAMILY MEMBER"/>
    <property type="match status" value="1"/>
</dbReference>
<dbReference type="PANTHER" id="PTHR11880:SF8">
    <property type="entry name" value="SMALL RIBOSOMAL SUBUNIT PROTEIN US19M"/>
    <property type="match status" value="1"/>
</dbReference>
<dbReference type="Pfam" id="PF00203">
    <property type="entry name" value="Ribosomal_S19"/>
    <property type="match status" value="1"/>
</dbReference>
<dbReference type="PIRSF" id="PIRSF002144">
    <property type="entry name" value="Ribosomal_S19"/>
    <property type="match status" value="1"/>
</dbReference>
<dbReference type="PRINTS" id="PR00975">
    <property type="entry name" value="RIBOSOMALS19"/>
</dbReference>
<dbReference type="SUPFAM" id="SSF54570">
    <property type="entry name" value="Ribosomal protein S19"/>
    <property type="match status" value="1"/>
</dbReference>
<dbReference type="PROSITE" id="PS00323">
    <property type="entry name" value="RIBOSOMAL_S19"/>
    <property type="match status" value="1"/>
</dbReference>
<proteinExistence type="inferred from homology"/>
<evidence type="ECO:0000255" key="1">
    <source>
        <dbReference type="HAMAP-Rule" id="MF_00531"/>
    </source>
</evidence>
<evidence type="ECO:0000305" key="2"/>
<accession>Q605B6</accession>
<reference key="1">
    <citation type="journal article" date="2004" name="PLoS Biol.">
        <title>Genomic insights into methanotrophy: the complete genome sequence of Methylococcus capsulatus (Bath).</title>
        <authorList>
            <person name="Ward N.L."/>
            <person name="Larsen O."/>
            <person name="Sakwa J."/>
            <person name="Bruseth L."/>
            <person name="Khouri H.M."/>
            <person name="Durkin A.S."/>
            <person name="Dimitrov G."/>
            <person name="Jiang L."/>
            <person name="Scanlan D."/>
            <person name="Kang K.H."/>
            <person name="Lewis M.R."/>
            <person name="Nelson K.E."/>
            <person name="Methe B.A."/>
            <person name="Wu M."/>
            <person name="Heidelberg J.F."/>
            <person name="Paulsen I.T."/>
            <person name="Fouts D.E."/>
            <person name="Ravel J."/>
            <person name="Tettelin H."/>
            <person name="Ren Q."/>
            <person name="Read T.D."/>
            <person name="DeBoy R.T."/>
            <person name="Seshadri R."/>
            <person name="Salzberg S.L."/>
            <person name="Jensen H.B."/>
            <person name="Birkeland N.K."/>
            <person name="Nelson W.C."/>
            <person name="Dodson R.J."/>
            <person name="Grindhaug S.H."/>
            <person name="Holt I.E."/>
            <person name="Eidhammer I."/>
            <person name="Jonasen I."/>
            <person name="Vanaken S."/>
            <person name="Utterback T.R."/>
            <person name="Feldblyum T.V."/>
            <person name="Fraser C.M."/>
            <person name="Lillehaug J.R."/>
            <person name="Eisen J.A."/>
        </authorList>
    </citation>
    <scope>NUCLEOTIDE SEQUENCE [LARGE SCALE GENOMIC DNA]</scope>
    <source>
        <strain>ATCC 33009 / NCIMB 11132 / Bath</strain>
    </source>
</reference>
<name>RS19_METCA</name>
<feature type="chain" id="PRO_0000129850" description="Small ribosomal subunit protein uS19">
    <location>
        <begin position="1"/>
        <end position="90"/>
    </location>
</feature>
<sequence length="90" mass="10068">MPRSIKKGPFVDHHLMKKIDEANATGAKKPIKTWSRRSMVLPEMIGKTIAVHNGKQHVPVLVSDNMVGHKLGEFAPTRTYKGHQADKKSK</sequence>
<organism>
    <name type="scientific">Methylococcus capsulatus (strain ATCC 33009 / NCIMB 11132 / Bath)</name>
    <dbReference type="NCBI Taxonomy" id="243233"/>
    <lineage>
        <taxon>Bacteria</taxon>
        <taxon>Pseudomonadati</taxon>
        <taxon>Pseudomonadota</taxon>
        <taxon>Gammaproteobacteria</taxon>
        <taxon>Methylococcales</taxon>
        <taxon>Methylococcaceae</taxon>
        <taxon>Methylococcus</taxon>
    </lineage>
</organism>
<protein>
    <recommendedName>
        <fullName evidence="1">Small ribosomal subunit protein uS19</fullName>
    </recommendedName>
    <alternativeName>
        <fullName evidence="2">30S ribosomal protein S19</fullName>
    </alternativeName>
</protein>
<keyword id="KW-1185">Reference proteome</keyword>
<keyword id="KW-0687">Ribonucleoprotein</keyword>
<keyword id="KW-0689">Ribosomal protein</keyword>
<keyword id="KW-0694">RNA-binding</keyword>
<keyword id="KW-0699">rRNA-binding</keyword>
<gene>
    <name evidence="1" type="primary">rpsS</name>
    <name type="ordered locus">MCA2368</name>
</gene>
<comment type="function">
    <text evidence="1">Protein S19 forms a complex with S13 that binds strongly to the 16S ribosomal RNA.</text>
</comment>
<comment type="similarity">
    <text evidence="1">Belongs to the universal ribosomal protein uS19 family.</text>
</comment>